<dbReference type="EC" id="6.1.1.20" evidence="1"/>
<dbReference type="EMBL" id="CP000254">
    <property type="protein sequence ID" value="ABD41451.1"/>
    <property type="molecule type" value="Genomic_DNA"/>
</dbReference>
<dbReference type="RefSeq" id="WP_011448716.1">
    <property type="nucleotide sequence ID" value="NC_007796.1"/>
</dbReference>
<dbReference type="SMR" id="Q2FLL1"/>
<dbReference type="FunCoup" id="Q2FLL1">
    <property type="interactions" value="229"/>
</dbReference>
<dbReference type="STRING" id="323259.Mhun_1728"/>
<dbReference type="EnsemblBacteria" id="ABD41451">
    <property type="protein sequence ID" value="ABD41451"/>
    <property type="gene ID" value="Mhun_1728"/>
</dbReference>
<dbReference type="GeneID" id="3924932"/>
<dbReference type="KEGG" id="mhu:Mhun_1728"/>
<dbReference type="eggNOG" id="arCOG00412">
    <property type="taxonomic scope" value="Archaea"/>
</dbReference>
<dbReference type="HOGENOM" id="CLU_020279_3_0_2"/>
<dbReference type="InParanoid" id="Q2FLL1"/>
<dbReference type="OrthoDB" id="10073at2157"/>
<dbReference type="Proteomes" id="UP000001941">
    <property type="component" value="Chromosome"/>
</dbReference>
<dbReference type="GO" id="GO:0009328">
    <property type="term" value="C:phenylalanine-tRNA ligase complex"/>
    <property type="evidence" value="ECO:0007669"/>
    <property type="project" value="TreeGrafter"/>
</dbReference>
<dbReference type="GO" id="GO:0005524">
    <property type="term" value="F:ATP binding"/>
    <property type="evidence" value="ECO:0007669"/>
    <property type="project" value="UniProtKB-UniRule"/>
</dbReference>
<dbReference type="GO" id="GO:0000287">
    <property type="term" value="F:magnesium ion binding"/>
    <property type="evidence" value="ECO:0007669"/>
    <property type="project" value="InterPro"/>
</dbReference>
<dbReference type="GO" id="GO:0004826">
    <property type="term" value="F:phenylalanine-tRNA ligase activity"/>
    <property type="evidence" value="ECO:0007669"/>
    <property type="project" value="UniProtKB-UniRule"/>
</dbReference>
<dbReference type="GO" id="GO:0003723">
    <property type="term" value="F:RNA binding"/>
    <property type="evidence" value="ECO:0007669"/>
    <property type="project" value="InterPro"/>
</dbReference>
<dbReference type="GO" id="GO:0006432">
    <property type="term" value="P:phenylalanyl-tRNA aminoacylation"/>
    <property type="evidence" value="ECO:0007669"/>
    <property type="project" value="UniProtKB-UniRule"/>
</dbReference>
<dbReference type="FunFam" id="3.50.40.10:FF:000003">
    <property type="entry name" value="Phenylalanine--tRNA ligase beta subunit"/>
    <property type="match status" value="1"/>
</dbReference>
<dbReference type="Gene3D" id="3.30.56.10">
    <property type="match status" value="2"/>
</dbReference>
<dbReference type="Gene3D" id="3.30.930.10">
    <property type="entry name" value="Bira Bifunctional Protein, Domain 2"/>
    <property type="match status" value="1"/>
</dbReference>
<dbReference type="Gene3D" id="3.50.40.10">
    <property type="entry name" value="Phenylalanyl-trna Synthetase, Chain B, domain 3"/>
    <property type="match status" value="1"/>
</dbReference>
<dbReference type="HAMAP" id="MF_00284">
    <property type="entry name" value="Phe_tRNA_synth_beta2"/>
    <property type="match status" value="1"/>
</dbReference>
<dbReference type="InterPro" id="IPR045864">
    <property type="entry name" value="aa-tRNA-synth_II/BPL/LPL"/>
</dbReference>
<dbReference type="InterPro" id="IPR005146">
    <property type="entry name" value="B3/B4_tRNA-bd"/>
</dbReference>
<dbReference type="InterPro" id="IPR009061">
    <property type="entry name" value="DNA-bd_dom_put_sf"/>
</dbReference>
<dbReference type="InterPro" id="IPR045060">
    <property type="entry name" value="Phe-tRNA-ligase_IIc_bsu"/>
</dbReference>
<dbReference type="InterPro" id="IPR004531">
    <property type="entry name" value="Phe-tRNA-synth_IIc_bsu_arc_euk"/>
</dbReference>
<dbReference type="InterPro" id="IPR020825">
    <property type="entry name" value="Phe-tRNA_synthase-like_B3/B4"/>
</dbReference>
<dbReference type="InterPro" id="IPR022918">
    <property type="entry name" value="Phe_tRNA_ligase_beta2_arc"/>
</dbReference>
<dbReference type="InterPro" id="IPR041616">
    <property type="entry name" value="PheRS_beta_core"/>
</dbReference>
<dbReference type="InterPro" id="IPR005147">
    <property type="entry name" value="tRNA_synthase_B5-dom"/>
</dbReference>
<dbReference type="NCBIfam" id="TIGR00471">
    <property type="entry name" value="pheT_arch"/>
    <property type="match status" value="1"/>
</dbReference>
<dbReference type="PANTHER" id="PTHR10947:SF0">
    <property type="entry name" value="PHENYLALANINE--TRNA LIGASE BETA SUBUNIT"/>
    <property type="match status" value="1"/>
</dbReference>
<dbReference type="PANTHER" id="PTHR10947">
    <property type="entry name" value="PHENYLALANYL-TRNA SYNTHETASE BETA CHAIN AND LEUCINE-RICH REPEAT-CONTAINING PROTEIN 47"/>
    <property type="match status" value="1"/>
</dbReference>
<dbReference type="Pfam" id="PF03483">
    <property type="entry name" value="B3_4"/>
    <property type="match status" value="1"/>
</dbReference>
<dbReference type="Pfam" id="PF03484">
    <property type="entry name" value="B5"/>
    <property type="match status" value="1"/>
</dbReference>
<dbReference type="Pfam" id="PF17759">
    <property type="entry name" value="tRNA_synthFbeta"/>
    <property type="match status" value="1"/>
</dbReference>
<dbReference type="SMART" id="SM00873">
    <property type="entry name" value="B3_4"/>
    <property type="match status" value="1"/>
</dbReference>
<dbReference type="SMART" id="SM00874">
    <property type="entry name" value="B5"/>
    <property type="match status" value="1"/>
</dbReference>
<dbReference type="SUPFAM" id="SSF55681">
    <property type="entry name" value="Class II aaRS and biotin synthetases"/>
    <property type="match status" value="1"/>
</dbReference>
<dbReference type="SUPFAM" id="SSF46955">
    <property type="entry name" value="Putative DNA-binding domain"/>
    <property type="match status" value="2"/>
</dbReference>
<dbReference type="PROSITE" id="PS51483">
    <property type="entry name" value="B5"/>
    <property type="match status" value="1"/>
</dbReference>
<proteinExistence type="inferred from homology"/>
<reference key="1">
    <citation type="journal article" date="2016" name="Stand. Genomic Sci.">
        <title>Complete genome sequence of Methanospirillum hungatei type strain JF1.</title>
        <authorList>
            <person name="Gunsalus R.P."/>
            <person name="Cook L.E."/>
            <person name="Crable B."/>
            <person name="Rohlin L."/>
            <person name="McDonald E."/>
            <person name="Mouttaki H."/>
            <person name="Sieber J.R."/>
            <person name="Poweleit N."/>
            <person name="Zhou H."/>
            <person name="Lapidus A.L."/>
            <person name="Daligault H.E."/>
            <person name="Land M."/>
            <person name="Gilna P."/>
            <person name="Ivanova N."/>
            <person name="Kyrpides N."/>
            <person name="Culley D.E."/>
            <person name="McInerney M.J."/>
        </authorList>
    </citation>
    <scope>NUCLEOTIDE SEQUENCE [LARGE SCALE GENOMIC DNA]</scope>
    <source>
        <strain>ATCC 27890 / DSM 864 / NBRC 100397 / JF-1</strain>
    </source>
</reference>
<evidence type="ECO:0000255" key="1">
    <source>
        <dbReference type="HAMAP-Rule" id="MF_00284"/>
    </source>
</evidence>
<feature type="chain" id="PRO_1000022420" description="Phenylalanine--tRNA ligase beta subunit">
    <location>
        <begin position="1"/>
        <end position="545"/>
    </location>
</feature>
<feature type="domain" description="B5" evidence="1">
    <location>
        <begin position="266"/>
        <end position="342"/>
    </location>
</feature>
<feature type="binding site" evidence="1">
    <location>
        <position position="320"/>
    </location>
    <ligand>
        <name>Mg(2+)</name>
        <dbReference type="ChEBI" id="CHEBI:18420"/>
        <note>shared with alpha subunit</note>
    </ligand>
</feature>
<feature type="binding site" evidence="1">
    <location>
        <position position="326"/>
    </location>
    <ligand>
        <name>Mg(2+)</name>
        <dbReference type="ChEBI" id="CHEBI:18420"/>
        <note>shared with alpha subunit</note>
    </ligand>
</feature>
<feature type="binding site" evidence="1">
    <location>
        <position position="329"/>
    </location>
    <ligand>
        <name>Mg(2+)</name>
        <dbReference type="ChEBI" id="CHEBI:18420"/>
        <note>shared with alpha subunit</note>
    </ligand>
</feature>
<feature type="binding site" evidence="1">
    <location>
        <position position="330"/>
    </location>
    <ligand>
        <name>Mg(2+)</name>
        <dbReference type="ChEBI" id="CHEBI:18420"/>
        <note>shared with alpha subunit</note>
    </ligand>
</feature>
<organism>
    <name type="scientific">Methanospirillum hungatei JF-1 (strain ATCC 27890 / DSM 864 / NBRC 100397 / JF-1)</name>
    <dbReference type="NCBI Taxonomy" id="323259"/>
    <lineage>
        <taxon>Archaea</taxon>
        <taxon>Methanobacteriati</taxon>
        <taxon>Methanobacteriota</taxon>
        <taxon>Stenosarchaea group</taxon>
        <taxon>Methanomicrobia</taxon>
        <taxon>Methanomicrobiales</taxon>
        <taxon>Methanospirillaceae</taxon>
        <taxon>Methanospirillum</taxon>
    </lineage>
</organism>
<keyword id="KW-0030">Aminoacyl-tRNA synthetase</keyword>
<keyword id="KW-0067">ATP-binding</keyword>
<keyword id="KW-0963">Cytoplasm</keyword>
<keyword id="KW-0436">Ligase</keyword>
<keyword id="KW-0460">Magnesium</keyword>
<keyword id="KW-0479">Metal-binding</keyword>
<keyword id="KW-0547">Nucleotide-binding</keyword>
<keyword id="KW-0648">Protein biosynthesis</keyword>
<keyword id="KW-1185">Reference proteome</keyword>
<comment type="catalytic activity">
    <reaction evidence="1">
        <text>tRNA(Phe) + L-phenylalanine + ATP = L-phenylalanyl-tRNA(Phe) + AMP + diphosphate + H(+)</text>
        <dbReference type="Rhea" id="RHEA:19413"/>
        <dbReference type="Rhea" id="RHEA-COMP:9668"/>
        <dbReference type="Rhea" id="RHEA-COMP:9699"/>
        <dbReference type="ChEBI" id="CHEBI:15378"/>
        <dbReference type="ChEBI" id="CHEBI:30616"/>
        <dbReference type="ChEBI" id="CHEBI:33019"/>
        <dbReference type="ChEBI" id="CHEBI:58095"/>
        <dbReference type="ChEBI" id="CHEBI:78442"/>
        <dbReference type="ChEBI" id="CHEBI:78531"/>
        <dbReference type="ChEBI" id="CHEBI:456215"/>
        <dbReference type="EC" id="6.1.1.20"/>
    </reaction>
</comment>
<comment type="cofactor">
    <cofactor evidence="1">
        <name>Mg(2+)</name>
        <dbReference type="ChEBI" id="CHEBI:18420"/>
    </cofactor>
</comment>
<comment type="subunit">
    <text evidence="1">Tetramer of two alpha and two beta subunits.</text>
</comment>
<comment type="subcellular location">
    <subcellularLocation>
        <location evidence="1">Cytoplasm</location>
    </subcellularLocation>
</comment>
<comment type="similarity">
    <text evidence="1">Belongs to the phenylalanyl-tRNA synthetase beta subunit family. Type 2 subfamily.</text>
</comment>
<protein>
    <recommendedName>
        <fullName evidence="1">Phenylalanine--tRNA ligase beta subunit</fullName>
        <ecNumber evidence="1">6.1.1.20</ecNumber>
    </recommendedName>
    <alternativeName>
        <fullName evidence="1">Phenylalanyl-tRNA synthetase beta subunit</fullName>
        <shortName evidence="1">PheRS</shortName>
    </alternativeName>
</protein>
<name>SYFB_METHJ</name>
<gene>
    <name evidence="1" type="primary">pheT</name>
    <name type="ordered locus">Mhun_1728</name>
</gene>
<accession>Q2FLL1</accession>
<sequence length="545" mass="60393">MPVVSLPYKYLERLCGIDRKTIIDHLPMIGSDIERILEDQVDVEFFPSRVDLYSTEGVARAMRGFLELETGEEVYPVSPSSITFSVDENLKEVRPYIGSAVIRDIQLDNEAIISLMGVQEALHWVVGRGRAKVAIGVHDLDKVTPPFRYYGAPVTRSFIPLDYDREMTLTEIMEEHPKGRDYSHIVKDKPVMPLIEDANGNVLSFPPIINGELTRVTESSKNLLLDVTGTDERAVMTALRVLCTTLITAGGRCESVTVNGVVMPDLSPALRNINVTSCNKLLGTSFSADEIATILKKMRYGAEKSGDSTVSIRIPCYRADIMHEWDVYEDVAIGAGFGNLEAELPATFATGCEHPIIALASAIRDICSGLGYLEVMPFTLSNEDVMYTRMQREPDPKALHVLHPISEEQTLVRTDLLPLLLDLLRMNKRRELPQRIFHTGDVVSSMQTYQKLALASTHPGADFSEAYATTDALMRELGISYLPAESADPAFIPGRAVDIMVDGKKMGVFGEIHPGVLNKFDIDQPVIGIEIDLHLLFPGQKETKS</sequence>